<accession>A0A2Z5XAK4</accession>
<evidence type="ECO:0000250" key="1">
    <source>
        <dbReference type="UniProtKB" id="Q9Y7D0"/>
    </source>
</evidence>
<evidence type="ECO:0000255" key="2"/>
<evidence type="ECO:0000269" key="3">
    <source>
    </source>
</evidence>
<evidence type="ECO:0000269" key="4">
    <source>
    </source>
</evidence>
<evidence type="ECO:0000303" key="5">
    <source>
    </source>
</evidence>
<evidence type="ECO:0000305" key="6"/>
<keyword id="KW-0521">NADP</keyword>
<keyword id="KW-0547">Nucleotide-binding</keyword>
<keyword id="KW-0560">Oxidoreductase</keyword>
<protein>
    <recommendedName>
        <fullName evidence="5">Trans-enoyl reductase phm4</fullName>
        <shortName evidence="5">ER phm4</shortName>
        <ecNumber evidence="3">1.-.-.-</ecNumber>
    </recommendedName>
    <alternativeName>
        <fullName evidence="5">Phomasetin biosynthesis cluster protein 4</fullName>
    </alternativeName>
</protein>
<organism>
    <name type="scientific">Pyrenochaetopsis sp</name>
    <dbReference type="NCBI Taxonomy" id="1756125"/>
    <lineage>
        <taxon>Eukaryota</taxon>
        <taxon>Fungi</taxon>
        <taxon>Dikarya</taxon>
        <taxon>Ascomycota</taxon>
        <taxon>Pezizomycotina</taxon>
        <taxon>Dothideomycetes</taxon>
        <taxon>Pleosporomycetidae</taxon>
        <taxon>Pleosporales</taxon>
        <taxon>Pleosporineae</taxon>
        <taxon>Pyrenochaetopsidaceae</taxon>
        <taxon>Pyrenochaetopsis</taxon>
    </lineage>
</organism>
<sequence length="362" mass="38483">MPGIIDSSSKQSAIVGNSYGSTELSHNVPIPHAEGDNVVVRTRAVSVNPVDAKMMGPYVTAGAIAGCDFAGEIEAIGPEALSWGFKIGDRVCASIMGMNPLEPDHGAFAQHVATHANALVRIPETMSFEEAAALCTCFMTCGLALFQSLGLPGSPVKPSASATQVLVYGGATATGTAAIQLLRLAGFTPIATCSPHSNELVKTFGAEATFDYNDPECAAKIRAFTKNGLRYALDCITNRSSMQICYGSLGRVGGRYTALDPYPEDIAATRKIVKAAWVVGPIMLGHDIGWPAPHGRKADPDLFKFGMEWKKLVEGLMAKGVIKPHPLDVRKGGMERVIECMEAIRAKEVNGKKLVVSLRENH</sequence>
<feature type="chain" id="PRO_0000453338" description="Trans-enoyl reductase phm4">
    <location>
        <begin position="1"/>
        <end position="362"/>
    </location>
</feature>
<feature type="binding site" evidence="1">
    <location>
        <begin position="50"/>
        <end position="53"/>
    </location>
    <ligand>
        <name>NADP(+)</name>
        <dbReference type="ChEBI" id="CHEBI:58349"/>
    </ligand>
</feature>
<feature type="binding site" evidence="2">
    <location>
        <begin position="136"/>
        <end position="143"/>
    </location>
    <ligand>
        <name>substrate</name>
    </ligand>
</feature>
<feature type="binding site" evidence="1">
    <location>
        <begin position="171"/>
        <end position="174"/>
    </location>
    <ligand>
        <name>NADP(+)</name>
        <dbReference type="ChEBI" id="CHEBI:58349"/>
    </ligand>
</feature>
<feature type="binding site" evidence="1">
    <location>
        <begin position="194"/>
        <end position="197"/>
    </location>
    <ligand>
        <name>NADP(+)</name>
        <dbReference type="ChEBI" id="CHEBI:58349"/>
    </ligand>
</feature>
<feature type="binding site" evidence="1">
    <location>
        <position position="212"/>
    </location>
    <ligand>
        <name>NADP(+)</name>
        <dbReference type="ChEBI" id="CHEBI:58349"/>
    </ligand>
</feature>
<feature type="binding site" evidence="1">
    <location>
        <begin position="259"/>
        <end position="260"/>
    </location>
    <ligand>
        <name>NADP(+)</name>
        <dbReference type="ChEBI" id="CHEBI:58349"/>
    </ligand>
</feature>
<feature type="binding site" evidence="2">
    <location>
        <begin position="280"/>
        <end position="284"/>
    </location>
    <ligand>
        <name>substrate</name>
    </ligand>
</feature>
<feature type="binding site" evidence="1">
    <location>
        <begin position="349"/>
        <end position="350"/>
    </location>
    <ligand>
        <name>NADP(+)</name>
        <dbReference type="ChEBI" id="CHEBI:58349"/>
    </ligand>
</feature>
<proteinExistence type="evidence at protein level"/>
<comment type="function">
    <text evidence="3 4">Trans-enoyl reductase; part of the gene cluster that mediates the biosynthesis of the trans-fused decalin-containing tetramic acid phomasetin, the stereochemical opposite of the HIV-1 integrase inhibitor equisetin (PubMed:29972614). The PKS module of phm1 together with the enoylreductase phm4 catalyze the formation of the polyketide unit which is then conjugated to L-serine by the condensation domain of the phm1 NRPS module (PubMed:29972614). Activity of the Dieckmann cyclase domain (RED) of phm1 results in release of the Dieckmann product intermediate (PubMed:29972614). The Diels-Alderase phm7 then uses the Dieckmann product of phm1 as substrate and catalyzes the Diels-Alder cycloaddition to form the decalin ring of N-desmethylphomasetin (PubMed:29972614, PubMed:34121297). N-desmethylphomasetin is further methylated to phomasetin by the methyltransferase phm5 (PubMed:29972614).</text>
</comment>
<comment type="pathway">
    <text evidence="3">Secondary metabolite biosynthesis.</text>
</comment>
<comment type="subunit">
    <text evidence="1">Monomer.</text>
</comment>
<comment type="disruption phenotype">
    <text evidence="3">Impairs the production of phomasetin.</text>
</comment>
<comment type="similarity">
    <text evidence="6">Belongs to the zinc-containing alcohol dehydrogenase family.</text>
</comment>
<dbReference type="EC" id="1.-.-.-" evidence="3"/>
<dbReference type="EMBL" id="LC361337">
    <property type="protein sequence ID" value="BBC43187.1"/>
    <property type="molecule type" value="Genomic_DNA"/>
</dbReference>
<dbReference type="SMR" id="A0A2Z5XAK4"/>
<dbReference type="GO" id="GO:0000166">
    <property type="term" value="F:nucleotide binding"/>
    <property type="evidence" value="ECO:0007669"/>
    <property type="project" value="UniProtKB-KW"/>
</dbReference>
<dbReference type="GO" id="GO:0016651">
    <property type="term" value="F:oxidoreductase activity, acting on NAD(P)H"/>
    <property type="evidence" value="ECO:0007669"/>
    <property type="project" value="InterPro"/>
</dbReference>
<dbReference type="CDD" id="cd08249">
    <property type="entry name" value="enoyl_reductase_like"/>
    <property type="match status" value="1"/>
</dbReference>
<dbReference type="Gene3D" id="3.90.180.10">
    <property type="entry name" value="Medium-chain alcohol dehydrogenases, catalytic domain"/>
    <property type="match status" value="1"/>
</dbReference>
<dbReference type="Gene3D" id="3.40.50.720">
    <property type="entry name" value="NAD(P)-binding Rossmann-like Domain"/>
    <property type="match status" value="1"/>
</dbReference>
<dbReference type="InterPro" id="IPR013149">
    <property type="entry name" value="ADH-like_C"/>
</dbReference>
<dbReference type="InterPro" id="IPR013154">
    <property type="entry name" value="ADH-like_N"/>
</dbReference>
<dbReference type="InterPro" id="IPR011032">
    <property type="entry name" value="GroES-like_sf"/>
</dbReference>
<dbReference type="InterPro" id="IPR036291">
    <property type="entry name" value="NAD(P)-bd_dom_sf"/>
</dbReference>
<dbReference type="InterPro" id="IPR020843">
    <property type="entry name" value="PKS_ER"/>
</dbReference>
<dbReference type="InterPro" id="IPR047122">
    <property type="entry name" value="Trans-enoyl_RdTase-like"/>
</dbReference>
<dbReference type="PANTHER" id="PTHR45348">
    <property type="entry name" value="HYPOTHETICAL OXIDOREDUCTASE (EUROFUNG)"/>
    <property type="match status" value="1"/>
</dbReference>
<dbReference type="PANTHER" id="PTHR45348:SF1">
    <property type="entry name" value="TRANS-ENOYL REDUCTASE STHE"/>
    <property type="match status" value="1"/>
</dbReference>
<dbReference type="Pfam" id="PF08240">
    <property type="entry name" value="ADH_N"/>
    <property type="match status" value="1"/>
</dbReference>
<dbReference type="Pfam" id="PF00107">
    <property type="entry name" value="ADH_zinc_N"/>
    <property type="match status" value="1"/>
</dbReference>
<dbReference type="SMART" id="SM00829">
    <property type="entry name" value="PKS_ER"/>
    <property type="match status" value="1"/>
</dbReference>
<dbReference type="SUPFAM" id="SSF50129">
    <property type="entry name" value="GroES-like"/>
    <property type="match status" value="1"/>
</dbReference>
<dbReference type="SUPFAM" id="SSF51735">
    <property type="entry name" value="NAD(P)-binding Rossmann-fold domains"/>
    <property type="match status" value="1"/>
</dbReference>
<reference key="1">
    <citation type="journal article" date="2018" name="Angew. Chem. Int. Ed.">
        <title>Control of the stereochemical course of [4+2] cycloaddition during trans-decalin formation by Fsa2-family enzymes.</title>
        <authorList>
            <person name="Kato N."/>
            <person name="Nogawa T."/>
            <person name="Takita R."/>
            <person name="Kinugasa K."/>
            <person name="Kanai M."/>
            <person name="Uchiyama M."/>
            <person name="Osada H."/>
            <person name="Takahashi S."/>
        </authorList>
    </citation>
    <scope>NUCLEOTIDE SEQUENCE [GENOMIC DNA]</scope>
    <scope>FUNCTION</scope>
    <scope>CATALYTIC ACTIVITY</scope>
    <scope>DISRUPTION PHENOTYPE</scope>
    <scope>PATHWAY</scope>
    <source>
        <strain>RK10-F058</strain>
    </source>
</reference>
<reference key="2">
    <citation type="journal article" date="2021" name="Angew. Chem. Int. Ed.">
        <title>Molecular basis for two stereoselective Diels-Alderases that produce decalin skeletons*.</title>
        <authorList>
            <person name="Fujiyama K."/>
            <person name="Kato N."/>
            <person name="Re S."/>
            <person name="Kinugasa K."/>
            <person name="Watanabe K."/>
            <person name="Takita R."/>
            <person name="Nogawa T."/>
            <person name="Hino T."/>
            <person name="Osada H."/>
            <person name="Sugita Y."/>
            <person name="Takahashi S."/>
            <person name="Nagano S."/>
        </authorList>
    </citation>
    <scope>FUNCTION</scope>
</reference>
<name>PHM4_PYRSX</name>
<gene>
    <name evidence="5" type="primary">phm4</name>
</gene>